<gene>
    <name type="ORF">CG43998</name>
</gene>
<evidence type="ECO:0000255" key="1"/>
<evidence type="ECO:0000305" key="2"/>
<name>OPA31_DROME</name>
<feature type="chain" id="PRO_0000220764" description="Putative OPA3-like protein CG43998">
    <location>
        <begin position="1"/>
        <end position="153"/>
    </location>
</feature>
<feature type="coiled-coil region" evidence="1">
    <location>
        <begin position="101"/>
        <end position="153"/>
    </location>
</feature>
<sequence>MVIGSFPVGKIFIHGVKRISKPFGDLLIWMGKHHPFIRRYIIIPPAQLYNTFEVRSKLRMLRLKQPRRIPPLSTPVATRLGADMLSEAFVFGIGAGLIYYELSKTYTKTKKQNQEIEDQKRVLDECVDCISADVERNQREINWIKAALKNVEK</sequence>
<organism>
    <name type="scientific">Drosophila melanogaster</name>
    <name type="common">Fruit fly</name>
    <dbReference type="NCBI Taxonomy" id="7227"/>
    <lineage>
        <taxon>Eukaryota</taxon>
        <taxon>Metazoa</taxon>
        <taxon>Ecdysozoa</taxon>
        <taxon>Arthropoda</taxon>
        <taxon>Hexapoda</taxon>
        <taxon>Insecta</taxon>
        <taxon>Pterygota</taxon>
        <taxon>Neoptera</taxon>
        <taxon>Endopterygota</taxon>
        <taxon>Diptera</taxon>
        <taxon>Brachycera</taxon>
        <taxon>Muscomorpha</taxon>
        <taxon>Ephydroidea</taxon>
        <taxon>Drosophilidae</taxon>
        <taxon>Drosophila</taxon>
        <taxon>Sophophora</taxon>
    </lineage>
</organism>
<accession>Q9VCG2</accession>
<accession>A0A0B4LHM8</accession>
<accession>Q8T4I9</accession>
<comment type="similarity">
    <text evidence="2">Belongs to the OPA3 family.</text>
</comment>
<comment type="sequence caution" evidence="2">
    <conflict type="miscellaneous discrepancy">
        <sequence resource="EMBL-CDS" id="AAL89829"/>
    </conflict>
    <text>Intron retention. These sequences are incomplete at 3' end and extensively differ from that shown at positions 105-153.</text>
</comment>
<dbReference type="EMBL" id="AE014297">
    <property type="protein sequence ID" value="AAF56204.2"/>
    <property type="molecule type" value="Genomic_DNA"/>
</dbReference>
<dbReference type="EMBL" id="AE014297">
    <property type="protein sequence ID" value="AHN57490.1"/>
    <property type="molecule type" value="Genomic_DNA"/>
</dbReference>
<dbReference type="EMBL" id="AE014297">
    <property type="protein sequence ID" value="AHN57491.1"/>
    <property type="molecule type" value="Genomic_DNA"/>
</dbReference>
<dbReference type="EMBL" id="AY084091">
    <property type="protein sequence ID" value="AAL89829.1"/>
    <property type="status" value="ALT_SEQ"/>
    <property type="molecule type" value="mRNA"/>
</dbReference>
<dbReference type="RefSeq" id="NP_001287491.1">
    <property type="nucleotide sequence ID" value="NM_001300562.1"/>
</dbReference>
<dbReference type="RefSeq" id="NP_001287492.1">
    <property type="nucleotide sequence ID" value="NM_001300563.1"/>
</dbReference>
<dbReference type="RefSeq" id="NP_732914.2">
    <property type="nucleotide sequence ID" value="NM_170096.4"/>
</dbReference>
<dbReference type="SMR" id="Q9VCG2"/>
<dbReference type="FunCoup" id="Q9VCG2">
    <property type="interactions" value="109"/>
</dbReference>
<dbReference type="STRING" id="7227.FBpp0308727"/>
<dbReference type="PaxDb" id="7227-FBpp0110090"/>
<dbReference type="EnsemblMetazoa" id="FBtr0339667">
    <property type="protein sequence ID" value="FBpp0308726"/>
    <property type="gene ID" value="FBgn0264740"/>
</dbReference>
<dbReference type="EnsemblMetazoa" id="FBtr0339668">
    <property type="protein sequence ID" value="FBpp0308727"/>
    <property type="gene ID" value="FBgn0264740"/>
</dbReference>
<dbReference type="EnsemblMetazoa" id="FBtr0346524">
    <property type="protein sequence ID" value="FBpp0312142"/>
    <property type="gene ID" value="FBgn0264740"/>
</dbReference>
<dbReference type="GeneID" id="19836181"/>
<dbReference type="KEGG" id="dme:Dmel_CG43998"/>
<dbReference type="UCSC" id="CG13602-RA">
    <property type="organism name" value="d. melanogaster"/>
</dbReference>
<dbReference type="AGR" id="FB:FBgn0264740"/>
<dbReference type="FlyBase" id="FBgn0264740">
    <property type="gene designation" value="CG43998"/>
</dbReference>
<dbReference type="VEuPathDB" id="VectorBase:FBgn0264740"/>
<dbReference type="eggNOG" id="KOG3335">
    <property type="taxonomic scope" value="Eukaryota"/>
</dbReference>
<dbReference type="GeneTree" id="ENSGT00390000009795"/>
<dbReference type="HOGENOM" id="CLU_074707_5_2_1"/>
<dbReference type="InParanoid" id="Q9VCG2"/>
<dbReference type="OMA" id="NYRFRTN"/>
<dbReference type="OrthoDB" id="2129069at2759"/>
<dbReference type="PhylomeDB" id="Q9VCG2"/>
<dbReference type="BioGRID-ORCS" id="19836181">
    <property type="hits" value="0 hits in 1 CRISPR screen"/>
</dbReference>
<dbReference type="GenomeRNAi" id="19836181"/>
<dbReference type="PRO" id="PR:Q9VCG2"/>
<dbReference type="Proteomes" id="UP000000803">
    <property type="component" value="Chromosome 3R"/>
</dbReference>
<dbReference type="Bgee" id="FBgn0264740">
    <property type="expression patterns" value="Expressed in imaginal disc and 4 other cell types or tissues"/>
</dbReference>
<dbReference type="GO" id="GO:0005739">
    <property type="term" value="C:mitochondrion"/>
    <property type="evidence" value="ECO:0000250"/>
    <property type="project" value="FlyBase"/>
</dbReference>
<dbReference type="GO" id="GO:0019216">
    <property type="term" value="P:regulation of lipid metabolic process"/>
    <property type="evidence" value="ECO:0000318"/>
    <property type="project" value="GO_Central"/>
</dbReference>
<dbReference type="InterPro" id="IPR010754">
    <property type="entry name" value="OPA3-like"/>
</dbReference>
<dbReference type="PANTHER" id="PTHR12499:SF0">
    <property type="entry name" value="OPTIC ATROPHY 3 PROTEIN"/>
    <property type="match status" value="1"/>
</dbReference>
<dbReference type="PANTHER" id="PTHR12499">
    <property type="entry name" value="OPTIC ATROPHY 3 PROTEIN OPA3"/>
    <property type="match status" value="1"/>
</dbReference>
<dbReference type="Pfam" id="PF07047">
    <property type="entry name" value="OPA3"/>
    <property type="match status" value="1"/>
</dbReference>
<protein>
    <recommendedName>
        <fullName>Putative OPA3-like protein CG43998</fullName>
    </recommendedName>
</protein>
<reference key="1">
    <citation type="journal article" date="2000" name="Science">
        <title>The genome sequence of Drosophila melanogaster.</title>
        <authorList>
            <person name="Adams M.D."/>
            <person name="Celniker S.E."/>
            <person name="Holt R.A."/>
            <person name="Evans C.A."/>
            <person name="Gocayne J.D."/>
            <person name="Amanatides P.G."/>
            <person name="Scherer S.E."/>
            <person name="Li P.W."/>
            <person name="Hoskins R.A."/>
            <person name="Galle R.F."/>
            <person name="George R.A."/>
            <person name="Lewis S.E."/>
            <person name="Richards S."/>
            <person name="Ashburner M."/>
            <person name="Henderson S.N."/>
            <person name="Sutton G.G."/>
            <person name="Wortman J.R."/>
            <person name="Yandell M.D."/>
            <person name="Zhang Q."/>
            <person name="Chen L.X."/>
            <person name="Brandon R.C."/>
            <person name="Rogers Y.-H.C."/>
            <person name="Blazej R.G."/>
            <person name="Champe M."/>
            <person name="Pfeiffer B.D."/>
            <person name="Wan K.H."/>
            <person name="Doyle C."/>
            <person name="Baxter E.G."/>
            <person name="Helt G."/>
            <person name="Nelson C.R."/>
            <person name="Miklos G.L.G."/>
            <person name="Abril J.F."/>
            <person name="Agbayani A."/>
            <person name="An H.-J."/>
            <person name="Andrews-Pfannkoch C."/>
            <person name="Baldwin D."/>
            <person name="Ballew R.M."/>
            <person name="Basu A."/>
            <person name="Baxendale J."/>
            <person name="Bayraktaroglu L."/>
            <person name="Beasley E.M."/>
            <person name="Beeson K.Y."/>
            <person name="Benos P.V."/>
            <person name="Berman B.P."/>
            <person name="Bhandari D."/>
            <person name="Bolshakov S."/>
            <person name="Borkova D."/>
            <person name="Botchan M.R."/>
            <person name="Bouck J."/>
            <person name="Brokstein P."/>
            <person name="Brottier P."/>
            <person name="Burtis K.C."/>
            <person name="Busam D.A."/>
            <person name="Butler H."/>
            <person name="Cadieu E."/>
            <person name="Center A."/>
            <person name="Chandra I."/>
            <person name="Cherry J.M."/>
            <person name="Cawley S."/>
            <person name="Dahlke C."/>
            <person name="Davenport L.B."/>
            <person name="Davies P."/>
            <person name="de Pablos B."/>
            <person name="Delcher A."/>
            <person name="Deng Z."/>
            <person name="Mays A.D."/>
            <person name="Dew I."/>
            <person name="Dietz S.M."/>
            <person name="Dodson K."/>
            <person name="Doup L.E."/>
            <person name="Downes M."/>
            <person name="Dugan-Rocha S."/>
            <person name="Dunkov B.C."/>
            <person name="Dunn P."/>
            <person name="Durbin K.J."/>
            <person name="Evangelista C.C."/>
            <person name="Ferraz C."/>
            <person name="Ferriera S."/>
            <person name="Fleischmann W."/>
            <person name="Fosler C."/>
            <person name="Gabrielian A.E."/>
            <person name="Garg N.S."/>
            <person name="Gelbart W.M."/>
            <person name="Glasser K."/>
            <person name="Glodek A."/>
            <person name="Gong F."/>
            <person name="Gorrell J.H."/>
            <person name="Gu Z."/>
            <person name="Guan P."/>
            <person name="Harris M."/>
            <person name="Harris N.L."/>
            <person name="Harvey D.A."/>
            <person name="Heiman T.J."/>
            <person name="Hernandez J.R."/>
            <person name="Houck J."/>
            <person name="Hostin D."/>
            <person name="Houston K.A."/>
            <person name="Howland T.J."/>
            <person name="Wei M.-H."/>
            <person name="Ibegwam C."/>
            <person name="Jalali M."/>
            <person name="Kalush F."/>
            <person name="Karpen G.H."/>
            <person name="Ke Z."/>
            <person name="Kennison J.A."/>
            <person name="Ketchum K.A."/>
            <person name="Kimmel B.E."/>
            <person name="Kodira C.D."/>
            <person name="Kraft C.L."/>
            <person name="Kravitz S."/>
            <person name="Kulp D."/>
            <person name="Lai Z."/>
            <person name="Lasko P."/>
            <person name="Lei Y."/>
            <person name="Levitsky A.A."/>
            <person name="Li J.H."/>
            <person name="Li Z."/>
            <person name="Liang Y."/>
            <person name="Lin X."/>
            <person name="Liu X."/>
            <person name="Mattei B."/>
            <person name="McIntosh T.C."/>
            <person name="McLeod M.P."/>
            <person name="McPherson D."/>
            <person name="Merkulov G."/>
            <person name="Milshina N.V."/>
            <person name="Mobarry C."/>
            <person name="Morris J."/>
            <person name="Moshrefi A."/>
            <person name="Mount S.M."/>
            <person name="Moy M."/>
            <person name="Murphy B."/>
            <person name="Murphy L."/>
            <person name="Muzny D.M."/>
            <person name="Nelson D.L."/>
            <person name="Nelson D.R."/>
            <person name="Nelson K.A."/>
            <person name="Nixon K."/>
            <person name="Nusskern D.R."/>
            <person name="Pacleb J.M."/>
            <person name="Palazzolo M."/>
            <person name="Pittman G.S."/>
            <person name="Pan S."/>
            <person name="Pollard J."/>
            <person name="Puri V."/>
            <person name="Reese M.G."/>
            <person name="Reinert K."/>
            <person name="Remington K."/>
            <person name="Saunders R.D.C."/>
            <person name="Scheeler F."/>
            <person name="Shen H."/>
            <person name="Shue B.C."/>
            <person name="Siden-Kiamos I."/>
            <person name="Simpson M."/>
            <person name="Skupski M.P."/>
            <person name="Smith T.J."/>
            <person name="Spier E."/>
            <person name="Spradling A.C."/>
            <person name="Stapleton M."/>
            <person name="Strong R."/>
            <person name="Sun E."/>
            <person name="Svirskas R."/>
            <person name="Tector C."/>
            <person name="Turner R."/>
            <person name="Venter E."/>
            <person name="Wang A.H."/>
            <person name="Wang X."/>
            <person name="Wang Z.-Y."/>
            <person name="Wassarman D.A."/>
            <person name="Weinstock G.M."/>
            <person name="Weissenbach J."/>
            <person name="Williams S.M."/>
            <person name="Woodage T."/>
            <person name="Worley K.C."/>
            <person name="Wu D."/>
            <person name="Yang S."/>
            <person name="Yao Q.A."/>
            <person name="Ye J."/>
            <person name="Yeh R.-F."/>
            <person name="Zaveri J.S."/>
            <person name="Zhan M."/>
            <person name="Zhang G."/>
            <person name="Zhao Q."/>
            <person name="Zheng L."/>
            <person name="Zheng X.H."/>
            <person name="Zhong F.N."/>
            <person name="Zhong W."/>
            <person name="Zhou X."/>
            <person name="Zhu S.C."/>
            <person name="Zhu X."/>
            <person name="Smith H.O."/>
            <person name="Gibbs R.A."/>
            <person name="Myers E.W."/>
            <person name="Rubin G.M."/>
            <person name="Venter J.C."/>
        </authorList>
    </citation>
    <scope>NUCLEOTIDE SEQUENCE [LARGE SCALE GENOMIC DNA]</scope>
    <source>
        <strain>Berkeley</strain>
    </source>
</reference>
<reference key="2">
    <citation type="journal article" date="2002" name="Genome Biol.">
        <title>Annotation of the Drosophila melanogaster euchromatic genome: a systematic review.</title>
        <authorList>
            <person name="Misra S."/>
            <person name="Crosby M.A."/>
            <person name="Mungall C.J."/>
            <person name="Matthews B.B."/>
            <person name="Campbell K.S."/>
            <person name="Hradecky P."/>
            <person name="Huang Y."/>
            <person name="Kaminker J.S."/>
            <person name="Millburn G.H."/>
            <person name="Prochnik S.E."/>
            <person name="Smith C.D."/>
            <person name="Tupy J.L."/>
            <person name="Whitfield E.J."/>
            <person name="Bayraktaroglu L."/>
            <person name="Berman B.P."/>
            <person name="Bettencourt B.R."/>
            <person name="Celniker S.E."/>
            <person name="de Grey A.D.N.J."/>
            <person name="Drysdale R.A."/>
            <person name="Harris N.L."/>
            <person name="Richter J."/>
            <person name="Russo S."/>
            <person name="Schroeder A.J."/>
            <person name="Shu S.Q."/>
            <person name="Stapleton M."/>
            <person name="Yamada C."/>
            <person name="Ashburner M."/>
            <person name="Gelbart W.M."/>
            <person name="Rubin G.M."/>
            <person name="Lewis S.E."/>
        </authorList>
    </citation>
    <scope>GENOME REANNOTATION</scope>
    <source>
        <strain>Berkeley</strain>
    </source>
</reference>
<reference key="3">
    <citation type="journal article" date="2002" name="Genome Biol.">
        <title>A Drosophila full-length cDNA resource.</title>
        <authorList>
            <person name="Stapleton M."/>
            <person name="Carlson J.W."/>
            <person name="Brokstein P."/>
            <person name="Yu C."/>
            <person name="Champe M."/>
            <person name="George R.A."/>
            <person name="Guarin H."/>
            <person name="Kronmiller B."/>
            <person name="Pacleb J.M."/>
            <person name="Park S."/>
            <person name="Wan K.H."/>
            <person name="Rubin G.M."/>
            <person name="Celniker S.E."/>
        </authorList>
    </citation>
    <scope>NUCLEOTIDE SEQUENCE [LARGE SCALE MRNA]</scope>
    <source>
        <strain>Berkeley</strain>
        <tissue>Testis</tissue>
    </source>
</reference>
<keyword id="KW-0175">Coiled coil</keyword>
<keyword id="KW-1185">Reference proteome</keyword>
<proteinExistence type="evidence at transcript level"/>